<reference key="1">
    <citation type="journal article" date="2009" name="PLoS ONE">
        <title>Salmonella paratyphi C: genetic divergence from Salmonella choleraesuis and pathogenic convergence with Salmonella typhi.</title>
        <authorList>
            <person name="Liu W.-Q."/>
            <person name="Feng Y."/>
            <person name="Wang Y."/>
            <person name="Zou Q.-H."/>
            <person name="Chen F."/>
            <person name="Guo J.-T."/>
            <person name="Peng Y.-H."/>
            <person name="Jin Y."/>
            <person name="Li Y.-G."/>
            <person name="Hu S.-N."/>
            <person name="Johnston R.N."/>
            <person name="Liu G.-R."/>
            <person name="Liu S.-L."/>
        </authorList>
    </citation>
    <scope>NUCLEOTIDE SEQUENCE [LARGE SCALE GENOMIC DNA]</scope>
    <source>
        <strain>RKS4594</strain>
    </source>
</reference>
<sequence>MSTSTQNIPWYRHLNRAQWRAFSAAWLGYLLDGFDFVLIALVLTEVQSEFGLTTVQAASLISAAFISRWFGGLLLGAMGDRYGRRLAMVSSIILFSVGTLACGFAPGYTTMFIARLVIGMGMAGEYGSSATYVIESWPKHLRNKASGFLISGFSVGAVVAAQVYSLVVPVWGWRALFFIGILPIIFALWLRKNIPEAEDWKEKHAGKAPVRTMVDILYRGEHRIINILMTFVAAAALWFCFAGNLQNAAIVAGLGLLCAVIFISFMVQSSGKRWPTGVMLMLVVLFAFLYSWPIQALLPTYLKTELAYDPHTVANVLFFSGFGAAVGCCVGGFLGDWLGTRKAYVCSLLASQILIIPVFAIGGTNVWVLGLLLFFQQMLGQGIAGILPKLIGGYFDTAQRAAGLGFTYNVGALGGALAPILGALIAQRLDLGTALASLSFSLTFVVILLIGLDMPSRVQRWLRPEALRTHDAIDDKPFSGAVPLGSGKGAFVKTKS</sequence>
<accession>C0PZN3</accession>
<gene>
    <name evidence="1" type="primary">nanT</name>
    <name type="ordered locus">SPC_3408</name>
</gene>
<proteinExistence type="inferred from homology"/>
<organism>
    <name type="scientific">Salmonella paratyphi C (strain RKS4594)</name>
    <dbReference type="NCBI Taxonomy" id="476213"/>
    <lineage>
        <taxon>Bacteria</taxon>
        <taxon>Pseudomonadati</taxon>
        <taxon>Pseudomonadota</taxon>
        <taxon>Gammaproteobacteria</taxon>
        <taxon>Enterobacterales</taxon>
        <taxon>Enterobacteriaceae</taxon>
        <taxon>Salmonella</taxon>
    </lineage>
</organism>
<name>NANT_SALPC</name>
<keyword id="KW-0997">Cell inner membrane</keyword>
<keyword id="KW-1003">Cell membrane</keyword>
<keyword id="KW-0472">Membrane</keyword>
<keyword id="KW-0762">Sugar transport</keyword>
<keyword id="KW-0812">Transmembrane</keyword>
<keyword id="KW-1133">Transmembrane helix</keyword>
<keyword id="KW-0813">Transport</keyword>
<evidence type="ECO:0000255" key="1">
    <source>
        <dbReference type="HAMAP-Rule" id="MF_01238"/>
    </source>
</evidence>
<feature type="chain" id="PRO_1000214065" description="Sialic acid transporter NanT">
    <location>
        <begin position="1"/>
        <end position="496"/>
    </location>
</feature>
<feature type="transmembrane region" description="Helical" evidence="1">
    <location>
        <begin position="22"/>
        <end position="42"/>
    </location>
</feature>
<feature type="transmembrane region" description="Helical" evidence="1">
    <location>
        <begin position="58"/>
        <end position="78"/>
    </location>
</feature>
<feature type="transmembrane region" description="Helical" evidence="1">
    <location>
        <begin position="86"/>
        <end position="106"/>
    </location>
</feature>
<feature type="transmembrane region" description="Helical" evidence="1">
    <location>
        <begin position="116"/>
        <end position="136"/>
    </location>
</feature>
<feature type="transmembrane region" description="Helical" evidence="1">
    <location>
        <begin position="148"/>
        <end position="168"/>
    </location>
</feature>
<feature type="transmembrane region" description="Helical" evidence="1">
    <location>
        <begin position="170"/>
        <end position="190"/>
    </location>
</feature>
<feature type="transmembrane region" description="Helical" evidence="1">
    <location>
        <begin position="224"/>
        <end position="244"/>
    </location>
</feature>
<feature type="transmembrane region" description="Helical" evidence="1">
    <location>
        <begin position="247"/>
        <end position="267"/>
    </location>
</feature>
<feature type="transmembrane region" description="Helical" evidence="1">
    <location>
        <begin position="278"/>
        <end position="298"/>
    </location>
</feature>
<feature type="transmembrane region" description="Helical" evidence="1">
    <location>
        <begin position="313"/>
        <end position="333"/>
    </location>
</feature>
<feature type="transmembrane region" description="Helical" evidence="1">
    <location>
        <begin position="353"/>
        <end position="373"/>
    </location>
</feature>
<feature type="transmembrane region" description="Helical" evidence="1">
    <location>
        <begin position="378"/>
        <end position="398"/>
    </location>
</feature>
<feature type="transmembrane region" description="Helical" evidence="1">
    <location>
        <begin position="406"/>
        <end position="426"/>
    </location>
</feature>
<feature type="transmembrane region" description="Helical" evidence="1">
    <location>
        <begin position="431"/>
        <end position="451"/>
    </location>
</feature>
<dbReference type="EMBL" id="CP000857">
    <property type="protein sequence ID" value="ACN47493.1"/>
    <property type="molecule type" value="Genomic_DNA"/>
</dbReference>
<dbReference type="RefSeq" id="WP_000108073.1">
    <property type="nucleotide sequence ID" value="NC_012125.1"/>
</dbReference>
<dbReference type="SMR" id="C0PZN3"/>
<dbReference type="KEGG" id="sei:SPC_3408"/>
<dbReference type="HOGENOM" id="CLU_001265_46_8_6"/>
<dbReference type="Proteomes" id="UP000001599">
    <property type="component" value="Chromosome"/>
</dbReference>
<dbReference type="GO" id="GO:0005886">
    <property type="term" value="C:plasma membrane"/>
    <property type="evidence" value="ECO:0007669"/>
    <property type="project" value="UniProtKB-SubCell"/>
</dbReference>
<dbReference type="GO" id="GO:0046943">
    <property type="term" value="F:carboxylic acid transmembrane transporter activity"/>
    <property type="evidence" value="ECO:0007669"/>
    <property type="project" value="TreeGrafter"/>
</dbReference>
<dbReference type="GO" id="GO:0015538">
    <property type="term" value="F:sialic acid:proton symporter activity"/>
    <property type="evidence" value="ECO:0007669"/>
    <property type="project" value="UniProtKB-UniRule"/>
</dbReference>
<dbReference type="CDD" id="cd17316">
    <property type="entry name" value="MFS_SV2_like"/>
    <property type="match status" value="1"/>
</dbReference>
<dbReference type="FunFam" id="1.20.1250.20:FF:000027">
    <property type="entry name" value="Sialic acid transporter NanT"/>
    <property type="match status" value="1"/>
</dbReference>
<dbReference type="FunFam" id="1.20.1250.20:FF:000038">
    <property type="entry name" value="Sialic acid transporter NanT"/>
    <property type="match status" value="1"/>
</dbReference>
<dbReference type="Gene3D" id="1.20.1250.20">
    <property type="entry name" value="MFS general substrate transporter like domains"/>
    <property type="match status" value="2"/>
</dbReference>
<dbReference type="HAMAP" id="MF_01238">
    <property type="entry name" value="MFS_NanT"/>
    <property type="match status" value="1"/>
</dbReference>
<dbReference type="InterPro" id="IPR011701">
    <property type="entry name" value="MFS"/>
</dbReference>
<dbReference type="InterPro" id="IPR020846">
    <property type="entry name" value="MFS_dom"/>
</dbReference>
<dbReference type="InterPro" id="IPR036259">
    <property type="entry name" value="MFS_trans_sf"/>
</dbReference>
<dbReference type="InterPro" id="IPR004742">
    <property type="entry name" value="SA_transporter"/>
</dbReference>
<dbReference type="NCBIfam" id="TIGR00891">
    <property type="entry name" value="2A0112"/>
    <property type="match status" value="1"/>
</dbReference>
<dbReference type="NCBIfam" id="NF003024">
    <property type="entry name" value="PRK03893.1"/>
    <property type="match status" value="1"/>
</dbReference>
<dbReference type="PANTHER" id="PTHR23508">
    <property type="entry name" value="CARBOXYLIC ACID TRANSPORTER PROTEIN HOMOLOG"/>
    <property type="match status" value="1"/>
</dbReference>
<dbReference type="PANTHER" id="PTHR23508:SF3">
    <property type="entry name" value="SIALIC ACID TRANSPORTER NANT"/>
    <property type="match status" value="1"/>
</dbReference>
<dbReference type="Pfam" id="PF07690">
    <property type="entry name" value="MFS_1"/>
    <property type="match status" value="1"/>
</dbReference>
<dbReference type="SUPFAM" id="SSF103473">
    <property type="entry name" value="MFS general substrate transporter"/>
    <property type="match status" value="1"/>
</dbReference>
<dbReference type="PROSITE" id="PS50850">
    <property type="entry name" value="MFS"/>
    <property type="match status" value="1"/>
</dbReference>
<protein>
    <recommendedName>
        <fullName evidence="1">Sialic acid transporter NanT</fullName>
    </recommendedName>
    <alternativeName>
        <fullName evidence="1">Sialic acid permease</fullName>
    </alternativeName>
    <alternativeName>
        <fullName evidence="1">Sialic acid/H(+) symporter</fullName>
    </alternativeName>
</protein>
<comment type="function">
    <text evidence="1">Catalyzes the proton-dependent transport of sialic acid.</text>
</comment>
<comment type="catalytic activity">
    <reaction evidence="1">
        <text>N-acetylneuraminate(in) + H(+)(in) = N-acetylneuraminate(out) + H(+)(out)</text>
        <dbReference type="Rhea" id="RHEA:28987"/>
        <dbReference type="ChEBI" id="CHEBI:15378"/>
        <dbReference type="ChEBI" id="CHEBI:35418"/>
    </reaction>
</comment>
<comment type="subcellular location">
    <subcellularLocation>
        <location evidence="1">Cell inner membrane</location>
        <topology evidence="1">Multi-pass membrane protein</topology>
    </subcellularLocation>
</comment>
<comment type="similarity">
    <text evidence="1">Belongs to the major facilitator superfamily. Sialate:H(+) symporter (SHS) (TC 2.A.1.12) family.</text>
</comment>